<sequence length="141" mass="15086">MAKKVVGEIKLQIAATKANPSPPVGPALGQQGVNIMEFCKAFNERTKDMAGYNIPVVITVYADKSFTFITKQPPATDLIKKAAGITKGADNPLKNKVGQLTKAQILEIVDKKIVDMNTKDKEQAAKIISGSARSMGITVVD</sequence>
<name>RL11_CAMFF</name>
<protein>
    <recommendedName>
        <fullName evidence="1">Large ribosomal subunit protein uL11</fullName>
    </recommendedName>
    <alternativeName>
        <fullName evidence="2">50S ribosomal protein L11</fullName>
    </alternativeName>
</protein>
<feature type="chain" id="PRO_1000046160" description="Large ribosomal subunit protein uL11">
    <location>
        <begin position="1"/>
        <end position="141"/>
    </location>
</feature>
<accession>A0RQI9</accession>
<organism>
    <name type="scientific">Campylobacter fetus subsp. fetus (strain 82-40)</name>
    <dbReference type="NCBI Taxonomy" id="360106"/>
    <lineage>
        <taxon>Bacteria</taxon>
        <taxon>Pseudomonadati</taxon>
        <taxon>Campylobacterota</taxon>
        <taxon>Epsilonproteobacteria</taxon>
        <taxon>Campylobacterales</taxon>
        <taxon>Campylobacteraceae</taxon>
        <taxon>Campylobacter</taxon>
    </lineage>
</organism>
<comment type="function">
    <text evidence="1">Forms part of the ribosomal stalk which helps the ribosome interact with GTP-bound translation factors.</text>
</comment>
<comment type="subunit">
    <text evidence="1">Part of the ribosomal stalk of the 50S ribosomal subunit. Interacts with L10 and the large rRNA to form the base of the stalk. L10 forms an elongated spine to which L12 dimers bind in a sequential fashion forming a multimeric L10(L12)X complex.</text>
</comment>
<comment type="PTM">
    <text evidence="1">One or more lysine residues are methylated.</text>
</comment>
<comment type="similarity">
    <text evidence="1">Belongs to the universal ribosomal protein uL11 family.</text>
</comment>
<proteinExistence type="inferred from homology"/>
<reference key="1">
    <citation type="submission" date="2006-11" db="EMBL/GenBank/DDBJ databases">
        <title>Sequence of Campylobacter fetus subsp. fetus 82-40.</title>
        <authorList>
            <person name="Fouts D.E."/>
            <person name="Nelson K.E."/>
        </authorList>
    </citation>
    <scope>NUCLEOTIDE SEQUENCE [LARGE SCALE GENOMIC DNA]</scope>
    <source>
        <strain>82-40</strain>
    </source>
</reference>
<gene>
    <name evidence="1" type="primary">rplK</name>
    <name type="ordered locus">CFF8240_1320</name>
</gene>
<keyword id="KW-0488">Methylation</keyword>
<keyword id="KW-0687">Ribonucleoprotein</keyword>
<keyword id="KW-0689">Ribosomal protein</keyword>
<keyword id="KW-0694">RNA-binding</keyword>
<keyword id="KW-0699">rRNA-binding</keyword>
<dbReference type="EMBL" id="CP000487">
    <property type="protein sequence ID" value="ABK81820.1"/>
    <property type="molecule type" value="Genomic_DNA"/>
</dbReference>
<dbReference type="RefSeq" id="WP_002850121.1">
    <property type="nucleotide sequence ID" value="NC_008599.1"/>
</dbReference>
<dbReference type="SMR" id="A0RQI9"/>
<dbReference type="GeneID" id="61065138"/>
<dbReference type="KEGG" id="cff:CFF8240_1320"/>
<dbReference type="eggNOG" id="COG0080">
    <property type="taxonomic scope" value="Bacteria"/>
</dbReference>
<dbReference type="HOGENOM" id="CLU_074237_2_0_7"/>
<dbReference type="Proteomes" id="UP000000760">
    <property type="component" value="Chromosome"/>
</dbReference>
<dbReference type="GO" id="GO:0022625">
    <property type="term" value="C:cytosolic large ribosomal subunit"/>
    <property type="evidence" value="ECO:0007669"/>
    <property type="project" value="TreeGrafter"/>
</dbReference>
<dbReference type="GO" id="GO:0070180">
    <property type="term" value="F:large ribosomal subunit rRNA binding"/>
    <property type="evidence" value="ECO:0007669"/>
    <property type="project" value="UniProtKB-UniRule"/>
</dbReference>
<dbReference type="GO" id="GO:0003735">
    <property type="term" value="F:structural constituent of ribosome"/>
    <property type="evidence" value="ECO:0007669"/>
    <property type="project" value="InterPro"/>
</dbReference>
<dbReference type="GO" id="GO:0006412">
    <property type="term" value="P:translation"/>
    <property type="evidence" value="ECO:0007669"/>
    <property type="project" value="UniProtKB-UniRule"/>
</dbReference>
<dbReference type="CDD" id="cd00349">
    <property type="entry name" value="Ribosomal_L11"/>
    <property type="match status" value="1"/>
</dbReference>
<dbReference type="FunFam" id="1.10.10.250:FF:000001">
    <property type="entry name" value="50S ribosomal protein L11"/>
    <property type="match status" value="1"/>
</dbReference>
<dbReference type="FunFam" id="3.30.1550.10:FF:000001">
    <property type="entry name" value="50S ribosomal protein L11"/>
    <property type="match status" value="1"/>
</dbReference>
<dbReference type="Gene3D" id="1.10.10.250">
    <property type="entry name" value="Ribosomal protein L11, C-terminal domain"/>
    <property type="match status" value="1"/>
</dbReference>
<dbReference type="Gene3D" id="3.30.1550.10">
    <property type="entry name" value="Ribosomal protein L11/L12, N-terminal domain"/>
    <property type="match status" value="1"/>
</dbReference>
<dbReference type="HAMAP" id="MF_00736">
    <property type="entry name" value="Ribosomal_uL11"/>
    <property type="match status" value="1"/>
</dbReference>
<dbReference type="InterPro" id="IPR000911">
    <property type="entry name" value="Ribosomal_uL11"/>
</dbReference>
<dbReference type="InterPro" id="IPR006519">
    <property type="entry name" value="Ribosomal_uL11_bac-typ"/>
</dbReference>
<dbReference type="InterPro" id="IPR020783">
    <property type="entry name" value="Ribosomal_uL11_C"/>
</dbReference>
<dbReference type="InterPro" id="IPR036769">
    <property type="entry name" value="Ribosomal_uL11_C_sf"/>
</dbReference>
<dbReference type="InterPro" id="IPR020785">
    <property type="entry name" value="Ribosomal_uL11_CS"/>
</dbReference>
<dbReference type="InterPro" id="IPR020784">
    <property type="entry name" value="Ribosomal_uL11_N"/>
</dbReference>
<dbReference type="InterPro" id="IPR036796">
    <property type="entry name" value="Ribosomal_uL11_N_sf"/>
</dbReference>
<dbReference type="NCBIfam" id="TIGR01632">
    <property type="entry name" value="L11_bact"/>
    <property type="match status" value="1"/>
</dbReference>
<dbReference type="PANTHER" id="PTHR11661">
    <property type="entry name" value="60S RIBOSOMAL PROTEIN L12"/>
    <property type="match status" value="1"/>
</dbReference>
<dbReference type="PANTHER" id="PTHR11661:SF1">
    <property type="entry name" value="LARGE RIBOSOMAL SUBUNIT PROTEIN UL11M"/>
    <property type="match status" value="1"/>
</dbReference>
<dbReference type="Pfam" id="PF00298">
    <property type="entry name" value="Ribosomal_L11"/>
    <property type="match status" value="1"/>
</dbReference>
<dbReference type="Pfam" id="PF03946">
    <property type="entry name" value="Ribosomal_L11_N"/>
    <property type="match status" value="1"/>
</dbReference>
<dbReference type="SMART" id="SM00649">
    <property type="entry name" value="RL11"/>
    <property type="match status" value="1"/>
</dbReference>
<dbReference type="SUPFAM" id="SSF54747">
    <property type="entry name" value="Ribosomal L11/L12e N-terminal domain"/>
    <property type="match status" value="1"/>
</dbReference>
<dbReference type="SUPFAM" id="SSF46906">
    <property type="entry name" value="Ribosomal protein L11, C-terminal domain"/>
    <property type="match status" value="1"/>
</dbReference>
<dbReference type="PROSITE" id="PS00359">
    <property type="entry name" value="RIBOSOMAL_L11"/>
    <property type="match status" value="1"/>
</dbReference>
<evidence type="ECO:0000255" key="1">
    <source>
        <dbReference type="HAMAP-Rule" id="MF_00736"/>
    </source>
</evidence>
<evidence type="ECO:0000305" key="2"/>